<comment type="function">
    <text evidence="1">NDH shuttles electrons from NAD(P)H:plastoquinone, via FMN and iron-sulfur (Fe-S) centers, to quinones in the photosynthetic chain and possibly in a chloroplast respiratory chain. The immediate electron acceptor for the enzyme in this species is believed to be plastoquinone. Couples the redox reaction to proton translocation, and thus conserves the redox energy in a proton gradient (By similarity).</text>
</comment>
<comment type="catalytic activity">
    <reaction>
        <text>a plastoquinone + NADH + (n+1) H(+)(in) = a plastoquinol + NAD(+) + n H(+)(out)</text>
        <dbReference type="Rhea" id="RHEA:42608"/>
        <dbReference type="Rhea" id="RHEA-COMP:9561"/>
        <dbReference type="Rhea" id="RHEA-COMP:9562"/>
        <dbReference type="ChEBI" id="CHEBI:15378"/>
        <dbReference type="ChEBI" id="CHEBI:17757"/>
        <dbReference type="ChEBI" id="CHEBI:57540"/>
        <dbReference type="ChEBI" id="CHEBI:57945"/>
        <dbReference type="ChEBI" id="CHEBI:62192"/>
    </reaction>
</comment>
<comment type="catalytic activity">
    <reaction>
        <text>a plastoquinone + NADPH + (n+1) H(+)(in) = a plastoquinol + NADP(+) + n H(+)(out)</text>
        <dbReference type="Rhea" id="RHEA:42612"/>
        <dbReference type="Rhea" id="RHEA-COMP:9561"/>
        <dbReference type="Rhea" id="RHEA-COMP:9562"/>
        <dbReference type="ChEBI" id="CHEBI:15378"/>
        <dbReference type="ChEBI" id="CHEBI:17757"/>
        <dbReference type="ChEBI" id="CHEBI:57783"/>
        <dbReference type="ChEBI" id="CHEBI:58349"/>
        <dbReference type="ChEBI" id="CHEBI:62192"/>
    </reaction>
</comment>
<comment type="subunit">
    <text evidence="1">NDH is composed of at least 16 different subunits, 5 of which are encoded in the nucleus.</text>
</comment>
<comment type="subcellular location">
    <subcellularLocation>
        <location evidence="1">Plastid</location>
        <location evidence="1">Chloroplast thylakoid membrane</location>
        <topology evidence="1">Multi-pass membrane protein</topology>
    </subcellularLocation>
</comment>
<comment type="similarity">
    <text evidence="3">Belongs to the complex I subunit 6 family.</text>
</comment>
<feature type="chain" id="PRO_0000360289" description="NAD(P)H-quinone oxidoreductase subunit 6, chloroplastic">
    <location>
        <begin position="1"/>
        <end position="188"/>
    </location>
</feature>
<feature type="transmembrane region" description="Helical" evidence="2">
    <location>
        <begin position="10"/>
        <end position="30"/>
    </location>
</feature>
<feature type="transmembrane region" description="Helical" evidence="2">
    <location>
        <begin position="32"/>
        <end position="52"/>
    </location>
</feature>
<feature type="transmembrane region" description="Helical" evidence="2">
    <location>
        <begin position="61"/>
        <end position="81"/>
    </location>
</feature>
<feature type="transmembrane region" description="Helical" evidence="2">
    <location>
        <begin position="97"/>
        <end position="117"/>
    </location>
</feature>
<feature type="transmembrane region" description="Helical" evidence="2">
    <location>
        <begin position="153"/>
        <end position="173"/>
    </location>
</feature>
<accession>Q8WHX6</accession>
<geneLocation type="chloroplast"/>
<organism>
    <name type="scientific">Psilotum nudum</name>
    <name type="common">Whisk fern</name>
    <name type="synonym">Lycopodium nudum</name>
    <dbReference type="NCBI Taxonomy" id="3240"/>
    <lineage>
        <taxon>Eukaryota</taxon>
        <taxon>Viridiplantae</taxon>
        <taxon>Streptophyta</taxon>
        <taxon>Embryophyta</taxon>
        <taxon>Tracheophyta</taxon>
        <taxon>Polypodiopsida</taxon>
        <taxon>Ophioglossidae</taxon>
        <taxon>Psilotales</taxon>
        <taxon>Psilotaceae</taxon>
        <taxon>Psilotum</taxon>
    </lineage>
</organism>
<gene>
    <name type="primary">ndhG</name>
</gene>
<keyword id="KW-0150">Chloroplast</keyword>
<keyword id="KW-0472">Membrane</keyword>
<keyword id="KW-0520">NAD</keyword>
<keyword id="KW-0521">NADP</keyword>
<keyword id="KW-0934">Plastid</keyword>
<keyword id="KW-0618">Plastoquinone</keyword>
<keyword id="KW-0874">Quinone</keyword>
<keyword id="KW-0793">Thylakoid</keyword>
<keyword id="KW-1278">Translocase</keyword>
<keyword id="KW-0812">Transmembrane</keyword>
<keyword id="KW-1133">Transmembrane helix</keyword>
<keyword id="KW-0813">Transport</keyword>
<reference key="1">
    <citation type="journal article" date="2004" name="Mol. Biol. Evol.">
        <title>Chloroplast phylogeny indicates that bryophytes are monophyletic.</title>
        <authorList>
            <person name="Nishiyama T."/>
            <person name="Wolf P.G."/>
            <person name="Kugita M."/>
            <person name="Sinclair R.B."/>
            <person name="Sugita M."/>
            <person name="Sugiura C."/>
            <person name="Wakasugi T."/>
            <person name="Yamada K."/>
            <person name="Yoshinaga K."/>
            <person name="Yamaguchi K."/>
            <person name="Ueda K."/>
            <person name="Hasebe M."/>
        </authorList>
    </citation>
    <scope>NUCLEOTIDE SEQUENCE [LARGE SCALE GENOMIC DNA]</scope>
    <source>
        <strain>Kingyoku</strain>
    </source>
</reference>
<protein>
    <recommendedName>
        <fullName>NAD(P)H-quinone oxidoreductase subunit 6, chloroplastic</fullName>
        <ecNumber>7.1.1.-</ecNumber>
    </recommendedName>
    <alternativeName>
        <fullName>NAD(P)H dehydrogenase subunit 6</fullName>
    </alternativeName>
    <alternativeName>
        <fullName>NADH-plastoquinone oxidoreductase subunit 6</fullName>
    </alternativeName>
</protein>
<dbReference type="EC" id="7.1.1.-"/>
<dbReference type="EMBL" id="AP004638">
    <property type="protein sequence ID" value="BAB84277.1"/>
    <property type="molecule type" value="Genomic_DNA"/>
</dbReference>
<dbReference type="RefSeq" id="NP_569688.1">
    <property type="nucleotide sequence ID" value="NC_003386.1"/>
</dbReference>
<dbReference type="SMR" id="Q8WHX6"/>
<dbReference type="GeneID" id="2545122"/>
<dbReference type="GO" id="GO:0009535">
    <property type="term" value="C:chloroplast thylakoid membrane"/>
    <property type="evidence" value="ECO:0007669"/>
    <property type="project" value="UniProtKB-SubCell"/>
</dbReference>
<dbReference type="GO" id="GO:0008137">
    <property type="term" value="F:NADH dehydrogenase (ubiquinone) activity"/>
    <property type="evidence" value="ECO:0007669"/>
    <property type="project" value="InterPro"/>
</dbReference>
<dbReference type="GO" id="GO:0048038">
    <property type="term" value="F:quinone binding"/>
    <property type="evidence" value="ECO:0007669"/>
    <property type="project" value="UniProtKB-KW"/>
</dbReference>
<dbReference type="FunFam" id="1.20.120.1200:FF:000002">
    <property type="entry name" value="NAD(P)H-quinone oxidoreductase subunit 6, chloroplastic"/>
    <property type="match status" value="1"/>
</dbReference>
<dbReference type="Gene3D" id="1.20.120.1200">
    <property type="entry name" value="NADH-ubiquinone/plastoquinone oxidoreductase chain 6, subunit NuoJ"/>
    <property type="match status" value="1"/>
</dbReference>
<dbReference type="InterPro" id="IPR050290">
    <property type="entry name" value="NAD(P)H-Q_Oxidoreduct_6"/>
</dbReference>
<dbReference type="InterPro" id="IPR001457">
    <property type="entry name" value="NADH_UbQ/plastoQ_OxRdtase_su6"/>
</dbReference>
<dbReference type="InterPro" id="IPR042106">
    <property type="entry name" value="Nuo/plastoQ_OxRdtase_6_NuoJ"/>
</dbReference>
<dbReference type="PANTHER" id="PTHR48479">
    <property type="entry name" value="NAD(P)H-QUINONE OXIDOREDUCTASE SUBUNIT 6, CHLOROPLASTIC"/>
    <property type="match status" value="1"/>
</dbReference>
<dbReference type="PANTHER" id="PTHR48479:SF1">
    <property type="entry name" value="NAD(P)H-QUINONE OXIDOREDUCTASE SUBUNIT 6, CHLOROPLASTIC"/>
    <property type="match status" value="1"/>
</dbReference>
<dbReference type="Pfam" id="PF00499">
    <property type="entry name" value="Oxidored_q3"/>
    <property type="match status" value="1"/>
</dbReference>
<proteinExistence type="inferred from homology"/>
<name>NU6C_PSINU</name>
<evidence type="ECO:0000250" key="1"/>
<evidence type="ECO:0000255" key="2"/>
<evidence type="ECO:0000305" key="3"/>
<sequence length="188" mass="20717">MNLPESIQKGILLIIELGILLGSMGVILLNDIVQSAFSLGLTFISISLLYLVLNADFVAAAQVLIYVGAINVLIVFSVMLIQKPHKNEDLSTSRNTGNNITLIVCTSLFLFLVSIILDTSWSQIYSIKKSTKIFEPILKSNVQLIGSQLLTEFLLPFELLSVLLLVALVGAITMSRQSRMFEMPDDEI</sequence>